<accession>O05229</accession>
<accession>O32088</accession>
<dbReference type="EMBL" id="Z93932">
    <property type="protein sequence ID" value="CAB07908.1"/>
    <property type="molecule type" value="Genomic_DNA"/>
</dbReference>
<dbReference type="EMBL" id="AL009126">
    <property type="protein sequence ID" value="CAB15152.3"/>
    <property type="molecule type" value="Genomic_DNA"/>
</dbReference>
<dbReference type="PIR" id="G70008">
    <property type="entry name" value="G70008"/>
</dbReference>
<dbReference type="RefSeq" id="NP_391041.3">
    <property type="nucleotide sequence ID" value="NC_000964.3"/>
</dbReference>
<dbReference type="RefSeq" id="WP_003244432.1">
    <property type="nucleotide sequence ID" value="NZ_OZ025638.1"/>
</dbReference>
<dbReference type="SMR" id="O05229"/>
<dbReference type="FunCoup" id="O05229">
    <property type="interactions" value="214"/>
</dbReference>
<dbReference type="STRING" id="224308.BSU31630"/>
<dbReference type="TCDB" id="2.A.63.1.4">
    <property type="family name" value="the monovalent cation (k(+) or na(+)):proton antiporter-3 (cpa3) family"/>
</dbReference>
<dbReference type="PaxDb" id="224308-BSU31630"/>
<dbReference type="EnsemblBacteria" id="CAB15152">
    <property type="protein sequence ID" value="CAB15152"/>
    <property type="gene ID" value="BSU_31630"/>
</dbReference>
<dbReference type="GeneID" id="938858"/>
<dbReference type="KEGG" id="bsu:BSU31630"/>
<dbReference type="PATRIC" id="fig|224308.179.peg.3428"/>
<dbReference type="eggNOG" id="COG0651">
    <property type="taxonomic scope" value="Bacteria"/>
</dbReference>
<dbReference type="InParanoid" id="O05229"/>
<dbReference type="OrthoDB" id="9811718at2"/>
<dbReference type="PhylomeDB" id="O05229"/>
<dbReference type="BioCyc" id="BSUB:BSU31630-MONOMER"/>
<dbReference type="Proteomes" id="UP000001570">
    <property type="component" value="Chromosome"/>
</dbReference>
<dbReference type="GO" id="GO:0005886">
    <property type="term" value="C:plasma membrane"/>
    <property type="evidence" value="ECO:0007669"/>
    <property type="project" value="UniProtKB-SubCell"/>
</dbReference>
<dbReference type="GO" id="GO:0008137">
    <property type="term" value="F:NADH dehydrogenase (ubiquinone) activity"/>
    <property type="evidence" value="ECO:0007669"/>
    <property type="project" value="InterPro"/>
</dbReference>
<dbReference type="GO" id="GO:0015386">
    <property type="term" value="F:potassium:proton antiporter activity"/>
    <property type="evidence" value="ECO:0007669"/>
    <property type="project" value="InterPro"/>
</dbReference>
<dbReference type="GO" id="GO:0015385">
    <property type="term" value="F:sodium:proton antiporter activity"/>
    <property type="evidence" value="ECO:0000315"/>
    <property type="project" value="CACAO"/>
</dbReference>
<dbReference type="GO" id="GO:0042773">
    <property type="term" value="P:ATP synthesis coupled electron transport"/>
    <property type="evidence" value="ECO:0007669"/>
    <property type="project" value="InterPro"/>
</dbReference>
<dbReference type="InterPro" id="IPR050586">
    <property type="entry name" value="CPA3_Na-H_Antiporter_D"/>
</dbReference>
<dbReference type="InterPro" id="IPR004775">
    <property type="entry name" value="MnhD1"/>
</dbReference>
<dbReference type="InterPro" id="IPR003918">
    <property type="entry name" value="NADH_UbQ_OxRdtase"/>
</dbReference>
<dbReference type="InterPro" id="IPR001750">
    <property type="entry name" value="ND/Mrp_TM"/>
</dbReference>
<dbReference type="NCBIfam" id="TIGR00944">
    <property type="entry name" value="2a6301s04"/>
    <property type="match status" value="1"/>
</dbReference>
<dbReference type="NCBIfam" id="NF005818">
    <property type="entry name" value="PRK07691.1"/>
    <property type="match status" value="1"/>
</dbReference>
<dbReference type="PANTHER" id="PTHR42703:SF1">
    <property type="entry name" value="NA(+)_H(+) ANTIPORTER SUBUNIT D1"/>
    <property type="match status" value="1"/>
</dbReference>
<dbReference type="PANTHER" id="PTHR42703">
    <property type="entry name" value="NADH DEHYDROGENASE"/>
    <property type="match status" value="1"/>
</dbReference>
<dbReference type="Pfam" id="PF00361">
    <property type="entry name" value="Proton_antipo_M"/>
    <property type="match status" value="1"/>
</dbReference>
<dbReference type="PRINTS" id="PR01437">
    <property type="entry name" value="NUOXDRDTASE4"/>
</dbReference>
<reference key="1">
    <citation type="journal article" date="1997" name="Microbiology">
        <title>Analysis of the Bacillus subtilis genome: cloning and nucleotide sequence of a 62 kb region between 275 degrees (rrnB) and 284 degrees (pai).</title>
        <authorList>
            <person name="Oudega B."/>
            <person name="Koningstein G."/>
            <person name="Rodrigues L."/>
            <person name="de Sales Ramon M."/>
            <person name="Hilbert H."/>
            <person name="Duesterhoeft A."/>
            <person name="Pohl T.M."/>
            <person name="Weitzenegger T."/>
        </authorList>
    </citation>
    <scope>NUCLEOTIDE SEQUENCE [GENOMIC DNA]</scope>
    <source>
        <strain>168</strain>
    </source>
</reference>
<reference key="2">
    <citation type="journal article" date="1997" name="Nature">
        <title>The complete genome sequence of the Gram-positive bacterium Bacillus subtilis.</title>
        <authorList>
            <person name="Kunst F."/>
            <person name="Ogasawara N."/>
            <person name="Moszer I."/>
            <person name="Albertini A.M."/>
            <person name="Alloni G."/>
            <person name="Azevedo V."/>
            <person name="Bertero M.G."/>
            <person name="Bessieres P."/>
            <person name="Bolotin A."/>
            <person name="Borchert S."/>
            <person name="Borriss R."/>
            <person name="Boursier L."/>
            <person name="Brans A."/>
            <person name="Braun M."/>
            <person name="Brignell S.C."/>
            <person name="Bron S."/>
            <person name="Brouillet S."/>
            <person name="Bruschi C.V."/>
            <person name="Caldwell B."/>
            <person name="Capuano V."/>
            <person name="Carter N.M."/>
            <person name="Choi S.-K."/>
            <person name="Codani J.-J."/>
            <person name="Connerton I.F."/>
            <person name="Cummings N.J."/>
            <person name="Daniel R.A."/>
            <person name="Denizot F."/>
            <person name="Devine K.M."/>
            <person name="Duesterhoeft A."/>
            <person name="Ehrlich S.D."/>
            <person name="Emmerson P.T."/>
            <person name="Entian K.-D."/>
            <person name="Errington J."/>
            <person name="Fabret C."/>
            <person name="Ferrari E."/>
            <person name="Foulger D."/>
            <person name="Fritz C."/>
            <person name="Fujita M."/>
            <person name="Fujita Y."/>
            <person name="Fuma S."/>
            <person name="Galizzi A."/>
            <person name="Galleron N."/>
            <person name="Ghim S.-Y."/>
            <person name="Glaser P."/>
            <person name="Goffeau A."/>
            <person name="Golightly E.J."/>
            <person name="Grandi G."/>
            <person name="Guiseppi G."/>
            <person name="Guy B.J."/>
            <person name="Haga K."/>
            <person name="Haiech J."/>
            <person name="Harwood C.R."/>
            <person name="Henaut A."/>
            <person name="Hilbert H."/>
            <person name="Holsappel S."/>
            <person name="Hosono S."/>
            <person name="Hullo M.-F."/>
            <person name="Itaya M."/>
            <person name="Jones L.-M."/>
            <person name="Joris B."/>
            <person name="Karamata D."/>
            <person name="Kasahara Y."/>
            <person name="Klaerr-Blanchard M."/>
            <person name="Klein C."/>
            <person name="Kobayashi Y."/>
            <person name="Koetter P."/>
            <person name="Koningstein G."/>
            <person name="Krogh S."/>
            <person name="Kumano M."/>
            <person name="Kurita K."/>
            <person name="Lapidus A."/>
            <person name="Lardinois S."/>
            <person name="Lauber J."/>
            <person name="Lazarevic V."/>
            <person name="Lee S.-M."/>
            <person name="Levine A."/>
            <person name="Liu H."/>
            <person name="Masuda S."/>
            <person name="Mauel C."/>
            <person name="Medigue C."/>
            <person name="Medina N."/>
            <person name="Mellado R.P."/>
            <person name="Mizuno M."/>
            <person name="Moestl D."/>
            <person name="Nakai S."/>
            <person name="Noback M."/>
            <person name="Noone D."/>
            <person name="O'Reilly M."/>
            <person name="Ogawa K."/>
            <person name="Ogiwara A."/>
            <person name="Oudega B."/>
            <person name="Park S.-H."/>
            <person name="Parro V."/>
            <person name="Pohl T.M."/>
            <person name="Portetelle D."/>
            <person name="Porwollik S."/>
            <person name="Prescott A.M."/>
            <person name="Presecan E."/>
            <person name="Pujic P."/>
            <person name="Purnelle B."/>
            <person name="Rapoport G."/>
            <person name="Rey M."/>
            <person name="Reynolds S."/>
            <person name="Rieger M."/>
            <person name="Rivolta C."/>
            <person name="Rocha E."/>
            <person name="Roche B."/>
            <person name="Rose M."/>
            <person name="Sadaie Y."/>
            <person name="Sato T."/>
            <person name="Scanlan E."/>
            <person name="Schleich S."/>
            <person name="Schroeter R."/>
            <person name="Scoffone F."/>
            <person name="Sekiguchi J."/>
            <person name="Sekowska A."/>
            <person name="Seror S.J."/>
            <person name="Serror P."/>
            <person name="Shin B.-S."/>
            <person name="Soldo B."/>
            <person name="Sorokin A."/>
            <person name="Tacconi E."/>
            <person name="Takagi T."/>
            <person name="Takahashi H."/>
            <person name="Takemaru K."/>
            <person name="Takeuchi M."/>
            <person name="Tamakoshi A."/>
            <person name="Tanaka T."/>
            <person name="Terpstra P."/>
            <person name="Tognoni A."/>
            <person name="Tosato V."/>
            <person name="Uchiyama S."/>
            <person name="Vandenbol M."/>
            <person name="Vannier F."/>
            <person name="Vassarotti A."/>
            <person name="Viari A."/>
            <person name="Wambutt R."/>
            <person name="Wedler E."/>
            <person name="Wedler H."/>
            <person name="Weitzenegger T."/>
            <person name="Winters P."/>
            <person name="Wipat A."/>
            <person name="Yamamoto H."/>
            <person name="Yamane K."/>
            <person name="Yasumoto K."/>
            <person name="Yata K."/>
            <person name="Yoshida K."/>
            <person name="Yoshikawa H.-F."/>
            <person name="Zumstein E."/>
            <person name="Yoshikawa H."/>
            <person name="Danchin A."/>
        </authorList>
    </citation>
    <scope>NUCLEOTIDE SEQUENCE [LARGE SCALE GENOMIC DNA]</scope>
    <source>
        <strain>168</strain>
    </source>
</reference>
<reference key="3">
    <citation type="journal article" date="1999" name="Genome Res.">
        <title>Detecting and analyzing DNA sequencing errors: toward a higher quality of the Bacillus subtilis genome sequence.</title>
        <authorList>
            <person name="Medigue C."/>
            <person name="Rose M."/>
            <person name="Viari A."/>
            <person name="Danchin A."/>
        </authorList>
    </citation>
    <scope>SEQUENCE REVISION</scope>
</reference>
<reference key="4">
    <citation type="journal article" date="2009" name="Microbiology">
        <title>From a consortium sequence to a unified sequence: the Bacillus subtilis 168 reference genome a decade later.</title>
        <authorList>
            <person name="Barbe V."/>
            <person name="Cruveiller S."/>
            <person name="Kunst F."/>
            <person name="Lenoble P."/>
            <person name="Meurice G."/>
            <person name="Sekowska A."/>
            <person name="Vallenet D."/>
            <person name="Wang T."/>
            <person name="Moszer I."/>
            <person name="Medigue C."/>
            <person name="Danchin A."/>
        </authorList>
    </citation>
    <scope>SEQUENCE REVISION TO 8; 13; 336 AND 455</scope>
</reference>
<reference key="5">
    <citation type="journal article" date="1999" name="J. Bacteriol.">
        <title>mrp, a multigene, multifunctional locus in Bacillus subtilis with roles in resistance to cholate and to Na+ and in pH homeostasis.</title>
        <authorList>
            <person name="Ito M."/>
            <person name="Guffanti A.A."/>
            <person name="Oudega B."/>
            <person name="Krulwich T.A."/>
        </authorList>
    </citation>
    <scope>FUNCTION</scope>
</reference>
<reference key="6">
    <citation type="journal article" date="2001" name="FEBS Lett.">
        <title>Mrp-dependent Na(+)/H(+) antiporters of Bacillus exhibit characteristics that are unanticipated for completely secondary active transporters.</title>
        <authorList>
            <person name="Ito M."/>
            <person name="Guffanti A.A."/>
            <person name="Krulwich T.A."/>
        </authorList>
    </citation>
    <scope>COUPLING ENERGIZATION MODE</scope>
</reference>
<reference key="7">
    <citation type="journal article" date="2007" name="J. Bacteriol.">
        <title>Catalytic properties of Staphylococcus aureus and Bacillus members of the secondary cation/proton antiporter-3 (Mrp) family are revealed by an optimized assay in an Escherichia coli host.</title>
        <authorList>
            <person name="Swartz T.H."/>
            <person name="Ito M."/>
            <person name="Ohira T."/>
            <person name="Natsui S."/>
            <person name="Hicks D.B."/>
            <person name="Krulwich T.A."/>
        </authorList>
    </citation>
    <scope>FUNCTION IN ANTIPORT OF LITHIUM</scope>
</reference>
<reference key="8">
    <citation type="journal article" date="2007" name="J. Bacteriol.">
        <title>Complex formation by the mrpABCDEFG gene products, which constitute a principal Na+/H+ antiporter in Bacillus subtilis.</title>
        <authorList>
            <person name="Kajiyama Y."/>
            <person name="Otagiri M."/>
            <person name="Sekiguchi J."/>
            <person name="Kosono S."/>
            <person name="Kudo T."/>
        </authorList>
    </citation>
    <scope>SUBUNIT</scope>
    <source>
        <strain>168 / Marburg / UOT1285</strain>
    </source>
</reference>
<name>MRPD_BACSU</name>
<evidence type="ECO:0000255" key="1"/>
<evidence type="ECO:0000269" key="2">
    <source>
    </source>
</evidence>
<evidence type="ECO:0000269" key="3">
    <source>
    </source>
</evidence>
<evidence type="ECO:0000269" key="4">
    <source>
    </source>
</evidence>
<evidence type="ECO:0000305" key="5"/>
<gene>
    <name type="primary">mrpD</name>
    <name type="synonym">yufD</name>
    <name type="ordered locus">BSU31630</name>
</gene>
<keyword id="KW-0050">Antiport</keyword>
<keyword id="KW-1003">Cell membrane</keyword>
<keyword id="KW-0375">Hydrogen ion transport</keyword>
<keyword id="KW-0406">Ion transport</keyword>
<keyword id="KW-0472">Membrane</keyword>
<keyword id="KW-1185">Reference proteome</keyword>
<keyword id="KW-0915">Sodium</keyword>
<keyword id="KW-0739">Sodium transport</keyword>
<keyword id="KW-0812">Transmembrane</keyword>
<keyword id="KW-1133">Transmembrane helix</keyword>
<keyword id="KW-0813">Transport</keyword>
<sequence length="493" mass="53477">MNNFVILPILIPLLSAILLIFMTKNLMLMRIFSTAASAIGIVISGILVQTVFTKGIQTLSLGGWKAPYGIVLAADQFASLLVLTTAIIGLLVGLYSFRSVGEKRERSFYYSGVQFLLAGVSGAFLTGDLFNMYVFFELLLIASYMLIVLGGTKIQLRESLKYIVFNIVSSALFVIGVGFLYAVTGTLNMADLSVKISESGQTGLITVIGVLLLLVFGMKGGIFPLYFWLPGSYYAPPAAISALFGALLTKVGLYAITRVFTLIFIHDTAFTHQLMIWLAALTVIFGVIGSLAYSNVMKIVIYNIITAVGVILFGVAVHTPASIQGAIYYLIHDMLIKGALFMLAGTLIALTGTASLHKMGGLIKRYPVLGWMFFISAISLAGIPPLSGFVGKFKIAEGGFAEGEFTISMLILLSSLLVLYSVLRIFIHAFWGEEKETPKPNHRTAKGLLYPAAIFLLLSLLFGLGTEWVSPYVDQAAETLLNPEKYIEAVLKE</sequence>
<feature type="chain" id="PRO_0000217084" description="Na(+)/H(+) antiporter subunit D">
    <location>
        <begin position="1"/>
        <end position="493"/>
    </location>
</feature>
<feature type="transmembrane region" description="Helical" evidence="1">
    <location>
        <begin position="3"/>
        <end position="23"/>
    </location>
</feature>
<feature type="transmembrane region" description="Helical" evidence="1">
    <location>
        <begin position="31"/>
        <end position="51"/>
    </location>
</feature>
<feature type="transmembrane region" description="Helical" evidence="1">
    <location>
        <begin position="77"/>
        <end position="97"/>
    </location>
</feature>
<feature type="transmembrane region" description="Helical" evidence="1">
    <location>
        <begin position="107"/>
        <end position="127"/>
    </location>
</feature>
<feature type="transmembrane region" description="Helical" evidence="1">
    <location>
        <begin position="129"/>
        <end position="149"/>
    </location>
</feature>
<feature type="transmembrane region" description="Helical" evidence="1">
    <location>
        <begin position="163"/>
        <end position="183"/>
    </location>
</feature>
<feature type="transmembrane region" description="Helical" evidence="1">
    <location>
        <begin position="203"/>
        <end position="223"/>
    </location>
</feature>
<feature type="transmembrane region" description="Helical" evidence="1">
    <location>
        <begin position="227"/>
        <end position="247"/>
    </location>
</feature>
<feature type="transmembrane region" description="Helical" evidence="1">
    <location>
        <begin position="251"/>
        <end position="271"/>
    </location>
</feature>
<feature type="transmembrane region" description="Helical" evidence="1">
    <location>
        <begin position="274"/>
        <end position="294"/>
    </location>
</feature>
<feature type="transmembrane region" description="Helical" evidence="1">
    <location>
        <begin position="299"/>
        <end position="319"/>
    </location>
</feature>
<feature type="transmembrane region" description="Helical" evidence="1">
    <location>
        <begin position="330"/>
        <end position="350"/>
    </location>
</feature>
<feature type="transmembrane region" description="Helical" evidence="1">
    <location>
        <begin position="370"/>
        <end position="390"/>
    </location>
</feature>
<feature type="transmembrane region" description="Helical" evidence="1">
    <location>
        <begin position="407"/>
        <end position="427"/>
    </location>
</feature>
<feature type="transmembrane region" description="Helical" evidence="1">
    <location>
        <begin position="449"/>
        <end position="469"/>
    </location>
</feature>
<feature type="sequence conflict" description="In Ref. 1; CAB07908." evidence="5" ref="1">
    <original>P</original>
    <variation>A</variation>
    <location>
        <position position="8"/>
    </location>
</feature>
<feature type="sequence conflict" description="In Ref. 1; CAB07908." evidence="5" ref="1">
    <original>L</original>
    <variation>I</variation>
    <location>
        <position position="13"/>
    </location>
</feature>
<feature type="sequence conflict" description="In Ref. 1; CAB07908." evidence="5" ref="1">
    <original>DQAAETLLNPEKYIEAVLKE</original>
    <variation>IKRPRRC</variation>
    <location>
        <begin position="474"/>
        <end position="493"/>
    </location>
</feature>
<comment type="function">
    <text evidence="2 3">Mrp complex is a Na(+)/H(+) antiporter that is considered to be the major Na(+) excretion system in B.subtilis. Has a major role in Na(+) resistance and a minor role in Na(+)- and K(+)-dependent pH homeostasis as compared to TetB. MrpA may be the actual Na(+)/H(+) antiporter, although the six other Mrp proteins are all required for Na(+)/H(+) antiport activity and Na(+) resistance. MrpA is required for initiation of sporulation when external Na(+) concentration increases. Also transports Li(+) but not K(+), Ca(2+) or Mg(2+).</text>
</comment>
<comment type="subunit">
    <text evidence="4">Forms a heterooligomeric complex that consists of seven subunits: MrpA, MrpB, MrpC, MrpD, MrpE, MrpF and MrpG.</text>
</comment>
<comment type="subcellular location">
    <subcellularLocation>
        <location evidence="5">Cell membrane</location>
        <topology evidence="5">Multi-pass membrane protein</topology>
    </subcellularLocation>
</comment>
<comment type="miscellaneous">
    <text>Mrp-dependent antiport apparently occurs by a secondary, proton motive force-dependent mechanism, but the similarity of several Mrp proteins to membrane-embedded subunits of energy-coupled NADH dehydrogenase complexes raises the possibility that there is a capacity for electron transport that could provide a primary energy coupling option for Mrp functions.</text>
</comment>
<comment type="similarity">
    <text evidence="5">Belongs to the CPA3 antiporters (TC 2.A.63) subunit D family.</text>
</comment>
<proteinExistence type="evidence at protein level"/>
<organism>
    <name type="scientific">Bacillus subtilis (strain 168)</name>
    <dbReference type="NCBI Taxonomy" id="224308"/>
    <lineage>
        <taxon>Bacteria</taxon>
        <taxon>Bacillati</taxon>
        <taxon>Bacillota</taxon>
        <taxon>Bacilli</taxon>
        <taxon>Bacillales</taxon>
        <taxon>Bacillaceae</taxon>
        <taxon>Bacillus</taxon>
    </lineage>
</organism>
<protein>
    <recommendedName>
        <fullName>Na(+)/H(+) antiporter subunit D</fullName>
    </recommendedName>
    <alternativeName>
        <fullName>Mrp complex subunit D</fullName>
    </alternativeName>
    <alternativeName>
        <fullName>Multiple resistance and pH homeostasis protein D</fullName>
    </alternativeName>
</protein>